<name>GATE_PYRIL</name>
<keyword id="KW-0067">ATP-binding</keyword>
<keyword id="KW-0436">Ligase</keyword>
<keyword id="KW-0547">Nucleotide-binding</keyword>
<keyword id="KW-0648">Protein biosynthesis</keyword>
<reference key="1">
    <citation type="submission" date="2006-12" db="EMBL/GenBank/DDBJ databases">
        <title>Complete sequence of Pyrobaculum islandicum DSM 4184.</title>
        <authorList>
            <person name="Copeland A."/>
            <person name="Lucas S."/>
            <person name="Lapidus A."/>
            <person name="Barry K."/>
            <person name="Detter J.C."/>
            <person name="Glavina del Rio T."/>
            <person name="Dalin E."/>
            <person name="Tice H."/>
            <person name="Pitluck S."/>
            <person name="Meincke L."/>
            <person name="Brettin T."/>
            <person name="Bruce D."/>
            <person name="Han C."/>
            <person name="Tapia R."/>
            <person name="Gilna P."/>
            <person name="Schmutz J."/>
            <person name="Larimer F."/>
            <person name="Land M."/>
            <person name="Hauser L."/>
            <person name="Kyrpides N."/>
            <person name="Mikhailova N."/>
            <person name="Cozen A.E."/>
            <person name="Fitz-Gibbon S.T."/>
            <person name="House C.H."/>
            <person name="Saltikov C."/>
            <person name="Lowe T."/>
            <person name="Richardson P."/>
        </authorList>
    </citation>
    <scope>NUCLEOTIDE SEQUENCE [LARGE SCALE GENOMIC DNA]</scope>
    <source>
        <strain>DSM 4184 / JCM 9189 / GEO3</strain>
    </source>
</reference>
<sequence>MDYRSLGLKVGLEIHIQLNTKRKLFCHCPPVLRDDEPHFRIERRLHLSVSELGAVDPAVLWEVRKRRRYIYEGYRDTTCLVELDEEPPHLPDEEALATAVAVAKMFNAKIFDEIHVMRKIVIDGSNVSGFQRTMLIAYGGKKKILGYDIGVETIALEEDAARKIAEEGKTVVYRLDRLGIPLIEIATEPMSYPPQQVEEVAWIIGYSVKITGRAKRGLGTVRQDVNVSIAGGAKTEIKGVPDLSLIPKVIEYEVQRQLSLLKISEELRRRGVGKLELSTVDVTQVFTNTKSKIVKRVLETGGKVVAVKTPGFQKIFGVEVQPGRRFGTELADYVRAWTELGGLLHSDELPGYGITAEEVRDIISKLGVESFILLMGVDDRELEEAATVVVDRLNTALQGVPEETRGANPDGTTRFLRPRPGAARMYPETDIPPIRITFEILKKSEEIAKVSLEGKLSELTSLGLSKDLALQLIKSPYLEKFEDYVSKYKVPPQQIATILLNISRALAREGVEITDEKIASVLEALEKKIITKEAVEEVLRNMKAGESAEEVAKRLGLVRMSYEEVKKVVGEVVREVGKDRALGEVMRRYRGRIDVEDVRRALSELYF</sequence>
<comment type="function">
    <text evidence="1">Allows the formation of correctly charged Gln-tRNA(Gln) through the transamidation of misacylated Glu-tRNA(Gln) in organisms which lack glutaminyl-tRNA synthetase. The reaction takes place in the presence of glutamine and ATP through an activated gamma-phospho-Glu-tRNA(Gln). The GatDE system is specific for glutamate and does not act on aspartate.</text>
</comment>
<comment type="catalytic activity">
    <reaction evidence="1">
        <text>L-glutamyl-tRNA(Gln) + L-glutamine + ATP + H2O = L-glutaminyl-tRNA(Gln) + L-glutamate + ADP + phosphate + H(+)</text>
        <dbReference type="Rhea" id="RHEA:17521"/>
        <dbReference type="Rhea" id="RHEA-COMP:9681"/>
        <dbReference type="Rhea" id="RHEA-COMP:9684"/>
        <dbReference type="ChEBI" id="CHEBI:15377"/>
        <dbReference type="ChEBI" id="CHEBI:15378"/>
        <dbReference type="ChEBI" id="CHEBI:29985"/>
        <dbReference type="ChEBI" id="CHEBI:30616"/>
        <dbReference type="ChEBI" id="CHEBI:43474"/>
        <dbReference type="ChEBI" id="CHEBI:58359"/>
        <dbReference type="ChEBI" id="CHEBI:78520"/>
        <dbReference type="ChEBI" id="CHEBI:78521"/>
        <dbReference type="ChEBI" id="CHEBI:456216"/>
    </reaction>
</comment>
<comment type="subunit">
    <text evidence="1">Heterodimer of GatD and GatE.</text>
</comment>
<comment type="similarity">
    <text evidence="1">Belongs to the GatB/GatE family. GatE subfamily.</text>
</comment>
<proteinExistence type="inferred from homology"/>
<dbReference type="EC" id="6.3.5.-" evidence="1"/>
<dbReference type="EMBL" id="CP000504">
    <property type="protein sequence ID" value="ABL87581.1"/>
    <property type="molecule type" value="Genomic_DNA"/>
</dbReference>
<dbReference type="RefSeq" id="WP_011762158.1">
    <property type="nucleotide sequence ID" value="NC_008701.1"/>
</dbReference>
<dbReference type="SMR" id="A1RRJ9"/>
<dbReference type="STRING" id="384616.Pisl_0403"/>
<dbReference type="GeneID" id="4618288"/>
<dbReference type="KEGG" id="pis:Pisl_0403"/>
<dbReference type="eggNOG" id="arCOG01719">
    <property type="taxonomic scope" value="Archaea"/>
</dbReference>
<dbReference type="HOGENOM" id="CLU_030702_0_0_2"/>
<dbReference type="OrthoDB" id="7316at2157"/>
<dbReference type="Proteomes" id="UP000002595">
    <property type="component" value="Chromosome"/>
</dbReference>
<dbReference type="GO" id="GO:0005737">
    <property type="term" value="C:cytoplasm"/>
    <property type="evidence" value="ECO:0007669"/>
    <property type="project" value="InterPro"/>
</dbReference>
<dbReference type="GO" id="GO:0004812">
    <property type="term" value="F:aminoacyl-tRNA ligase activity"/>
    <property type="evidence" value="ECO:0007669"/>
    <property type="project" value="InterPro"/>
</dbReference>
<dbReference type="GO" id="GO:0005524">
    <property type="term" value="F:ATP binding"/>
    <property type="evidence" value="ECO:0007669"/>
    <property type="project" value="UniProtKB-KW"/>
</dbReference>
<dbReference type="GO" id="GO:0050567">
    <property type="term" value="F:glutaminyl-tRNA synthase (glutamine-hydrolyzing) activity"/>
    <property type="evidence" value="ECO:0007669"/>
    <property type="project" value="UniProtKB-UniRule"/>
</dbReference>
<dbReference type="GO" id="GO:0070681">
    <property type="term" value="P:glutaminyl-tRNAGln biosynthesis via transamidation"/>
    <property type="evidence" value="ECO:0007669"/>
    <property type="project" value="TreeGrafter"/>
</dbReference>
<dbReference type="GO" id="GO:0006412">
    <property type="term" value="P:translation"/>
    <property type="evidence" value="ECO:0007669"/>
    <property type="project" value="UniProtKB-UniRule"/>
</dbReference>
<dbReference type="Gene3D" id="3.30.1360.30">
    <property type="entry name" value="GAD-like domain"/>
    <property type="match status" value="1"/>
</dbReference>
<dbReference type="Gene3D" id="1.10.150.380">
    <property type="entry name" value="GatB domain, N-terminal subdomain"/>
    <property type="match status" value="1"/>
</dbReference>
<dbReference type="HAMAP" id="MF_00588">
    <property type="entry name" value="GatE"/>
    <property type="match status" value="1"/>
</dbReference>
<dbReference type="InterPro" id="IPR017959">
    <property type="entry name" value="Asn/Gln-tRNA_amidoTrfase_suB/E"/>
</dbReference>
<dbReference type="InterPro" id="IPR006075">
    <property type="entry name" value="Asn/Gln-tRNA_Trfase_suB/E_cat"/>
</dbReference>
<dbReference type="InterPro" id="IPR018027">
    <property type="entry name" value="Asn/Gln_amidotransferase"/>
</dbReference>
<dbReference type="InterPro" id="IPR003789">
    <property type="entry name" value="Asn/Gln_tRNA_amidoTrase-B-like"/>
</dbReference>
<dbReference type="InterPro" id="IPR004115">
    <property type="entry name" value="GAD-like_sf"/>
</dbReference>
<dbReference type="InterPro" id="IPR029351">
    <property type="entry name" value="GAD_dom"/>
</dbReference>
<dbReference type="InterPro" id="IPR042114">
    <property type="entry name" value="GatB_C_1"/>
</dbReference>
<dbReference type="InterPro" id="IPR004414">
    <property type="entry name" value="GatE"/>
</dbReference>
<dbReference type="InterPro" id="IPR017958">
    <property type="entry name" value="Gln-tRNA_amidoTrfase_suB_CS"/>
</dbReference>
<dbReference type="InterPro" id="IPR014746">
    <property type="entry name" value="Gln_synth/guanido_kin_cat_dom"/>
</dbReference>
<dbReference type="NCBIfam" id="TIGR00134">
    <property type="entry name" value="gatE_arch"/>
    <property type="match status" value="1"/>
</dbReference>
<dbReference type="NCBIfam" id="NF003107">
    <property type="entry name" value="PRK04028.1"/>
    <property type="match status" value="1"/>
</dbReference>
<dbReference type="PANTHER" id="PTHR11659">
    <property type="entry name" value="GLUTAMYL-TRNA GLN AMIDOTRANSFERASE SUBUNIT B MITOCHONDRIAL AND PROKARYOTIC PET112-RELATED"/>
    <property type="match status" value="1"/>
</dbReference>
<dbReference type="PANTHER" id="PTHR11659:SF2">
    <property type="entry name" value="GLUTAMYL-TRNA(GLN) AMIDOTRANSFERASE SUBUNIT E"/>
    <property type="match status" value="1"/>
</dbReference>
<dbReference type="Pfam" id="PF02938">
    <property type="entry name" value="GAD"/>
    <property type="match status" value="1"/>
</dbReference>
<dbReference type="Pfam" id="PF02934">
    <property type="entry name" value="GatB_N"/>
    <property type="match status" value="1"/>
</dbReference>
<dbReference type="Pfam" id="PF02637">
    <property type="entry name" value="GatB_Yqey"/>
    <property type="match status" value="1"/>
</dbReference>
<dbReference type="SMART" id="SM00845">
    <property type="entry name" value="GatB_Yqey"/>
    <property type="match status" value="1"/>
</dbReference>
<dbReference type="SUPFAM" id="SSF55261">
    <property type="entry name" value="GAD domain-like"/>
    <property type="match status" value="1"/>
</dbReference>
<dbReference type="SUPFAM" id="SSF89095">
    <property type="entry name" value="GatB/YqeY motif"/>
    <property type="match status" value="1"/>
</dbReference>
<dbReference type="SUPFAM" id="SSF55931">
    <property type="entry name" value="Glutamine synthetase/guanido kinase"/>
    <property type="match status" value="1"/>
</dbReference>
<dbReference type="PROSITE" id="PS01234">
    <property type="entry name" value="GATB"/>
    <property type="match status" value="1"/>
</dbReference>
<accession>A1RRJ9</accession>
<gene>
    <name evidence="1" type="primary">gatE</name>
    <name type="ordered locus">Pisl_0403</name>
</gene>
<feature type="chain" id="PRO_1000025485" description="Glutamyl-tRNA(Gln) amidotransferase subunit E">
    <location>
        <begin position="1"/>
        <end position="607"/>
    </location>
</feature>
<protein>
    <recommendedName>
        <fullName evidence="1">Glutamyl-tRNA(Gln) amidotransferase subunit E</fullName>
        <shortName evidence="1">Glu-ADT subunit E</shortName>
        <ecNumber evidence="1">6.3.5.-</ecNumber>
    </recommendedName>
</protein>
<evidence type="ECO:0000255" key="1">
    <source>
        <dbReference type="HAMAP-Rule" id="MF_00588"/>
    </source>
</evidence>
<organism>
    <name type="scientific">Pyrobaculum islandicum (strain DSM 4184 / JCM 9189 / GEO3)</name>
    <dbReference type="NCBI Taxonomy" id="384616"/>
    <lineage>
        <taxon>Archaea</taxon>
        <taxon>Thermoproteota</taxon>
        <taxon>Thermoprotei</taxon>
        <taxon>Thermoproteales</taxon>
        <taxon>Thermoproteaceae</taxon>
        <taxon>Pyrobaculum</taxon>
    </lineage>
</organism>